<organism>
    <name type="scientific">Klebsiella pneumoniae subsp. pneumoniae (strain ATCC 700721 / MGH 78578)</name>
    <dbReference type="NCBI Taxonomy" id="272620"/>
    <lineage>
        <taxon>Bacteria</taxon>
        <taxon>Pseudomonadati</taxon>
        <taxon>Pseudomonadota</taxon>
        <taxon>Gammaproteobacteria</taxon>
        <taxon>Enterobacterales</taxon>
        <taxon>Enterobacteriaceae</taxon>
        <taxon>Klebsiella/Raoultella group</taxon>
        <taxon>Klebsiella</taxon>
        <taxon>Klebsiella pneumoniae complex</taxon>
    </lineage>
</organism>
<gene>
    <name evidence="1" type="primary">glyQ</name>
    <name type="ordered locus">KPN78578_38850</name>
    <name type="ORF">KPN_03923</name>
</gene>
<proteinExistence type="inferred from homology"/>
<sequence length="303" mass="34732">MQKFDTRTFQGLILTLQDYWARQGCTIVQPLDMEVGAGTSHPMTCLRALGPEPMATAYVQPSRRPTDGRYGENPNRLQHYYQFQVVIKPSPDNIQELYLGSLKELGMDPTIHDIRFVEDNWENPTLGAWGLGWEVWLNGMEVTQFTYFQQVGGLECKPVTGEITYGLERLAMYIQGVDSVYDLVWSDGPLGKTTYGDVFHQNEVEQSTYNFEYADVDFLFTCFEQYEKEAQQLLALETPLPLPAYERILKAAHSFNLLDARKAISVTERQRYILRIRTLTKAVAEAYYASREALGFPMCNKNK</sequence>
<dbReference type="EC" id="6.1.1.14" evidence="1"/>
<dbReference type="EMBL" id="CP000647">
    <property type="protein sequence ID" value="ABR79309.1"/>
    <property type="molecule type" value="Genomic_DNA"/>
</dbReference>
<dbReference type="RefSeq" id="WP_002922128.1">
    <property type="nucleotide sequence ID" value="NC_009648.1"/>
</dbReference>
<dbReference type="SMR" id="A6TFH5"/>
<dbReference type="STRING" id="272620.KPN_03923"/>
<dbReference type="PaxDb" id="272620-KPN_03923"/>
<dbReference type="EnsemblBacteria" id="ABR79309">
    <property type="protein sequence ID" value="ABR79309"/>
    <property type="gene ID" value="KPN_03923"/>
</dbReference>
<dbReference type="GeneID" id="69752929"/>
<dbReference type="KEGG" id="kpn:KPN_03923"/>
<dbReference type="HOGENOM" id="CLU_057066_1_0_6"/>
<dbReference type="Proteomes" id="UP000000265">
    <property type="component" value="Chromosome"/>
</dbReference>
<dbReference type="GO" id="GO:0005829">
    <property type="term" value="C:cytosol"/>
    <property type="evidence" value="ECO:0007669"/>
    <property type="project" value="TreeGrafter"/>
</dbReference>
<dbReference type="GO" id="GO:0005524">
    <property type="term" value="F:ATP binding"/>
    <property type="evidence" value="ECO:0007669"/>
    <property type="project" value="UniProtKB-UniRule"/>
</dbReference>
<dbReference type="GO" id="GO:0004820">
    <property type="term" value="F:glycine-tRNA ligase activity"/>
    <property type="evidence" value="ECO:0007669"/>
    <property type="project" value="UniProtKB-UniRule"/>
</dbReference>
<dbReference type="GO" id="GO:0006426">
    <property type="term" value="P:glycyl-tRNA aminoacylation"/>
    <property type="evidence" value="ECO:0007669"/>
    <property type="project" value="UniProtKB-UniRule"/>
</dbReference>
<dbReference type="CDD" id="cd00733">
    <property type="entry name" value="GlyRS_alpha_core"/>
    <property type="match status" value="1"/>
</dbReference>
<dbReference type="FunFam" id="1.20.58.180:FF:000001">
    <property type="entry name" value="Glycine--tRNA ligase alpha subunit"/>
    <property type="match status" value="1"/>
</dbReference>
<dbReference type="FunFam" id="3.30.930.10:FF:000006">
    <property type="entry name" value="Glycine--tRNA ligase alpha subunit"/>
    <property type="match status" value="1"/>
</dbReference>
<dbReference type="Gene3D" id="3.30.930.10">
    <property type="entry name" value="Bira Bifunctional Protein, Domain 2"/>
    <property type="match status" value="1"/>
</dbReference>
<dbReference type="Gene3D" id="1.20.58.180">
    <property type="entry name" value="Class II aaRS and biotin synthetases, domain 2"/>
    <property type="match status" value="1"/>
</dbReference>
<dbReference type="HAMAP" id="MF_00254">
    <property type="entry name" value="Gly_tRNA_synth_alpha"/>
    <property type="match status" value="1"/>
</dbReference>
<dbReference type="InterPro" id="IPR045864">
    <property type="entry name" value="aa-tRNA-synth_II/BPL/LPL"/>
</dbReference>
<dbReference type="InterPro" id="IPR006194">
    <property type="entry name" value="Gly-tRNA-synth_heterodimer"/>
</dbReference>
<dbReference type="InterPro" id="IPR002310">
    <property type="entry name" value="Gly-tRNA_ligase_asu"/>
</dbReference>
<dbReference type="NCBIfam" id="TIGR00388">
    <property type="entry name" value="glyQ"/>
    <property type="match status" value="1"/>
</dbReference>
<dbReference type="NCBIfam" id="NF006827">
    <property type="entry name" value="PRK09348.1"/>
    <property type="match status" value="1"/>
</dbReference>
<dbReference type="PANTHER" id="PTHR30075:SF2">
    <property type="entry name" value="GLYCINE--TRNA LIGASE, CHLOROPLASTIC_MITOCHONDRIAL 2"/>
    <property type="match status" value="1"/>
</dbReference>
<dbReference type="PANTHER" id="PTHR30075">
    <property type="entry name" value="GLYCYL-TRNA SYNTHETASE"/>
    <property type="match status" value="1"/>
</dbReference>
<dbReference type="Pfam" id="PF02091">
    <property type="entry name" value="tRNA-synt_2e"/>
    <property type="match status" value="1"/>
</dbReference>
<dbReference type="PRINTS" id="PR01044">
    <property type="entry name" value="TRNASYNTHGA"/>
</dbReference>
<dbReference type="SUPFAM" id="SSF55681">
    <property type="entry name" value="Class II aaRS and biotin synthetases"/>
    <property type="match status" value="1"/>
</dbReference>
<dbReference type="PROSITE" id="PS50861">
    <property type="entry name" value="AA_TRNA_LIGASE_II_GLYAB"/>
    <property type="match status" value="1"/>
</dbReference>
<protein>
    <recommendedName>
        <fullName evidence="1">Glycine--tRNA ligase alpha subunit</fullName>
        <ecNumber evidence="1">6.1.1.14</ecNumber>
    </recommendedName>
    <alternativeName>
        <fullName evidence="1">Glycyl-tRNA synthetase alpha subunit</fullName>
        <shortName evidence="1">GlyRS</shortName>
    </alternativeName>
</protein>
<evidence type="ECO:0000255" key="1">
    <source>
        <dbReference type="HAMAP-Rule" id="MF_00254"/>
    </source>
</evidence>
<accession>A6TFH5</accession>
<reference key="1">
    <citation type="submission" date="2006-09" db="EMBL/GenBank/DDBJ databases">
        <authorList>
            <consortium name="The Klebsiella pneumonia Genome Sequencing Project"/>
            <person name="McClelland M."/>
            <person name="Sanderson E.K."/>
            <person name="Spieth J."/>
            <person name="Clifton W.S."/>
            <person name="Latreille P."/>
            <person name="Sabo A."/>
            <person name="Pepin K."/>
            <person name="Bhonagiri V."/>
            <person name="Porwollik S."/>
            <person name="Ali J."/>
            <person name="Wilson R.K."/>
        </authorList>
    </citation>
    <scope>NUCLEOTIDE SEQUENCE [LARGE SCALE GENOMIC DNA]</scope>
    <source>
        <strain>ATCC 700721 / MGH 78578</strain>
    </source>
</reference>
<feature type="chain" id="PRO_1000047435" description="Glycine--tRNA ligase alpha subunit">
    <location>
        <begin position="1"/>
        <end position="303"/>
    </location>
</feature>
<name>SYGA_KLEP7</name>
<keyword id="KW-0030">Aminoacyl-tRNA synthetase</keyword>
<keyword id="KW-0067">ATP-binding</keyword>
<keyword id="KW-0963">Cytoplasm</keyword>
<keyword id="KW-0436">Ligase</keyword>
<keyword id="KW-0547">Nucleotide-binding</keyword>
<keyword id="KW-0648">Protein biosynthesis</keyword>
<comment type="catalytic activity">
    <reaction evidence="1">
        <text>tRNA(Gly) + glycine + ATP = glycyl-tRNA(Gly) + AMP + diphosphate</text>
        <dbReference type="Rhea" id="RHEA:16013"/>
        <dbReference type="Rhea" id="RHEA-COMP:9664"/>
        <dbReference type="Rhea" id="RHEA-COMP:9683"/>
        <dbReference type="ChEBI" id="CHEBI:30616"/>
        <dbReference type="ChEBI" id="CHEBI:33019"/>
        <dbReference type="ChEBI" id="CHEBI:57305"/>
        <dbReference type="ChEBI" id="CHEBI:78442"/>
        <dbReference type="ChEBI" id="CHEBI:78522"/>
        <dbReference type="ChEBI" id="CHEBI:456215"/>
        <dbReference type="EC" id="6.1.1.14"/>
    </reaction>
</comment>
<comment type="subunit">
    <text evidence="1">Tetramer of two alpha and two beta subunits.</text>
</comment>
<comment type="subcellular location">
    <subcellularLocation>
        <location evidence="1">Cytoplasm</location>
    </subcellularLocation>
</comment>
<comment type="similarity">
    <text evidence="1">Belongs to the class-II aminoacyl-tRNA synthetase family.</text>
</comment>